<comment type="function">
    <text evidence="1">May bind long-chain fatty acids, such as palmitate, and may play a role in lipid transport or fatty acid metabolism.</text>
</comment>
<sequence>MTAMPSFAVVTDGGLDAYPTLLNDVPVAPFSVAFGERSYPMNEVSRQWLYDELGRNPAHPTSSQPSPQQWLDAYAAVPSGTDILAVTISSGLSGSRNAAAQARDLAGRQVTLHDSMTLSAAQAFQVHAANVAAQRGESMETAIAWMNAVQAETELQFTIETLEYLRRGGRIGTVAAALGGLLNLKPVVMVDKKTGTYVNAGRARSYRGGIEAVTSQVTRKYGEGTPLRVGLLYGTHPEDADQALEQLAARHPIVWSDRTGVNPVLSVHVGPRALGVAAAPGAWPWER</sequence>
<gene>
    <name type="ordered locus">DR_0500</name>
</gene>
<organism>
    <name type="scientific">Deinococcus radiodurans (strain ATCC 13939 / DSM 20539 / JCM 16871 / CCUG 27074 / LMG 4051 / NBRC 15346 / NCIMB 9279 / VKM B-1422 / R1)</name>
    <dbReference type="NCBI Taxonomy" id="243230"/>
    <lineage>
        <taxon>Bacteria</taxon>
        <taxon>Thermotogati</taxon>
        <taxon>Deinococcota</taxon>
        <taxon>Deinococci</taxon>
        <taxon>Deinococcales</taxon>
        <taxon>Deinococcaceae</taxon>
        <taxon>Deinococcus</taxon>
    </lineage>
</organism>
<accession>Q9RX15</accession>
<dbReference type="EMBL" id="AE000513">
    <property type="protein sequence ID" value="AAF10080.1"/>
    <property type="molecule type" value="Genomic_DNA"/>
</dbReference>
<dbReference type="PIR" id="A75511">
    <property type="entry name" value="A75511"/>
</dbReference>
<dbReference type="RefSeq" id="NP_294223.1">
    <property type="nucleotide sequence ID" value="NC_001263.1"/>
</dbReference>
<dbReference type="RefSeq" id="WP_010887145.1">
    <property type="nucleotide sequence ID" value="NC_001263.1"/>
</dbReference>
<dbReference type="SMR" id="Q9RX15"/>
<dbReference type="STRING" id="243230.DR_0500"/>
<dbReference type="PaxDb" id="243230-DR_0500"/>
<dbReference type="EnsemblBacteria" id="AAF10080">
    <property type="protein sequence ID" value="AAF10080"/>
    <property type="gene ID" value="DR_0500"/>
</dbReference>
<dbReference type="GeneID" id="69516737"/>
<dbReference type="KEGG" id="dra:DR_0500"/>
<dbReference type="PATRIC" id="fig|243230.17.peg.678"/>
<dbReference type="eggNOG" id="COG1307">
    <property type="taxonomic scope" value="Bacteria"/>
</dbReference>
<dbReference type="HOGENOM" id="CLU_048251_0_1_0"/>
<dbReference type="InParanoid" id="Q9RX15"/>
<dbReference type="OrthoDB" id="9780216at2"/>
<dbReference type="Proteomes" id="UP000002524">
    <property type="component" value="Chromosome 1"/>
</dbReference>
<dbReference type="GO" id="GO:0008289">
    <property type="term" value="F:lipid binding"/>
    <property type="evidence" value="ECO:0007669"/>
    <property type="project" value="UniProtKB-KW"/>
</dbReference>
<dbReference type="Gene3D" id="3.30.1180.10">
    <property type="match status" value="1"/>
</dbReference>
<dbReference type="Gene3D" id="3.40.50.10170">
    <property type="match status" value="1"/>
</dbReference>
<dbReference type="InterPro" id="IPR003797">
    <property type="entry name" value="DegV"/>
</dbReference>
<dbReference type="InterPro" id="IPR043168">
    <property type="entry name" value="DegV_C"/>
</dbReference>
<dbReference type="InterPro" id="IPR050270">
    <property type="entry name" value="DegV_domain_contain"/>
</dbReference>
<dbReference type="NCBIfam" id="TIGR00762">
    <property type="entry name" value="DegV"/>
    <property type="match status" value="1"/>
</dbReference>
<dbReference type="PANTHER" id="PTHR33434">
    <property type="entry name" value="DEGV DOMAIN-CONTAINING PROTEIN DR_1986-RELATED"/>
    <property type="match status" value="1"/>
</dbReference>
<dbReference type="PANTHER" id="PTHR33434:SF2">
    <property type="entry name" value="FATTY ACID-BINDING PROTEIN TM_1468"/>
    <property type="match status" value="1"/>
</dbReference>
<dbReference type="Pfam" id="PF02645">
    <property type="entry name" value="DegV"/>
    <property type="match status" value="1"/>
</dbReference>
<dbReference type="SUPFAM" id="SSF82549">
    <property type="entry name" value="DAK1/DegV-like"/>
    <property type="match status" value="1"/>
</dbReference>
<dbReference type="PROSITE" id="PS51482">
    <property type="entry name" value="DEGV"/>
    <property type="match status" value="1"/>
</dbReference>
<proteinExistence type="inferred from homology"/>
<evidence type="ECO:0000250" key="1"/>
<evidence type="ECO:0000250" key="2">
    <source>
        <dbReference type="UniProtKB" id="Q9X1H9"/>
    </source>
</evidence>
<evidence type="ECO:0000255" key="3">
    <source>
        <dbReference type="PROSITE-ProRule" id="PRU00815"/>
    </source>
</evidence>
<feature type="chain" id="PRO_0000209762" description="DegV domain-containing protein DR_0500">
    <location>
        <begin position="1"/>
        <end position="287"/>
    </location>
</feature>
<feature type="domain" description="DegV" evidence="3">
    <location>
        <begin position="7"/>
        <end position="280"/>
    </location>
</feature>
<feature type="binding site" evidence="2">
    <location>
        <position position="62"/>
    </location>
    <ligand>
        <name>hexadecanoate</name>
        <dbReference type="ChEBI" id="CHEBI:7896"/>
    </ligand>
</feature>
<feature type="binding site" evidence="2">
    <location>
        <position position="93"/>
    </location>
    <ligand>
        <name>hexadecanoate</name>
        <dbReference type="ChEBI" id="CHEBI:7896"/>
    </ligand>
</feature>
<keyword id="KW-0446">Lipid-binding</keyword>
<keyword id="KW-1185">Reference proteome</keyword>
<reference key="1">
    <citation type="journal article" date="1999" name="Science">
        <title>Genome sequence of the radioresistant bacterium Deinococcus radiodurans R1.</title>
        <authorList>
            <person name="White O."/>
            <person name="Eisen J.A."/>
            <person name="Heidelberg J.F."/>
            <person name="Hickey E.K."/>
            <person name="Peterson J.D."/>
            <person name="Dodson R.J."/>
            <person name="Haft D.H."/>
            <person name="Gwinn M.L."/>
            <person name="Nelson W.C."/>
            <person name="Richardson D.L."/>
            <person name="Moffat K.S."/>
            <person name="Qin H."/>
            <person name="Jiang L."/>
            <person name="Pamphile W."/>
            <person name="Crosby M."/>
            <person name="Shen M."/>
            <person name="Vamathevan J.J."/>
            <person name="Lam P."/>
            <person name="McDonald L.A."/>
            <person name="Utterback T.R."/>
            <person name="Zalewski C."/>
            <person name="Makarova K.S."/>
            <person name="Aravind L."/>
            <person name="Daly M.J."/>
            <person name="Minton K.W."/>
            <person name="Fleischmann R.D."/>
            <person name="Ketchum K.A."/>
            <person name="Nelson K.E."/>
            <person name="Salzberg S.L."/>
            <person name="Smith H.O."/>
            <person name="Venter J.C."/>
            <person name="Fraser C.M."/>
        </authorList>
    </citation>
    <scope>NUCLEOTIDE SEQUENCE [LARGE SCALE GENOMIC DNA]</scope>
    <source>
        <strain>ATCC 13939 / DSM 20539 / JCM 16871 / CCUG 27074 / LMG 4051 / NBRC 15346 / NCIMB 9279 / VKM B-1422 / R1</strain>
    </source>
</reference>
<protein>
    <recommendedName>
        <fullName>DegV domain-containing protein DR_0500</fullName>
    </recommendedName>
</protein>
<name>Y500_DEIRA</name>